<proteinExistence type="inferred from homology"/>
<dbReference type="EMBL" id="AP008231">
    <property type="protein sequence ID" value="BAD78376.1"/>
    <property type="molecule type" value="Genomic_DNA"/>
</dbReference>
<dbReference type="SMR" id="Q5N5P2"/>
<dbReference type="KEGG" id="syc:syc0186_c"/>
<dbReference type="eggNOG" id="COG0353">
    <property type="taxonomic scope" value="Bacteria"/>
</dbReference>
<dbReference type="Proteomes" id="UP000001175">
    <property type="component" value="Chromosome"/>
</dbReference>
<dbReference type="GO" id="GO:0003677">
    <property type="term" value="F:DNA binding"/>
    <property type="evidence" value="ECO:0007669"/>
    <property type="project" value="UniProtKB-UniRule"/>
</dbReference>
<dbReference type="GO" id="GO:0008270">
    <property type="term" value="F:zinc ion binding"/>
    <property type="evidence" value="ECO:0007669"/>
    <property type="project" value="UniProtKB-KW"/>
</dbReference>
<dbReference type="GO" id="GO:0006310">
    <property type="term" value="P:DNA recombination"/>
    <property type="evidence" value="ECO:0007669"/>
    <property type="project" value="UniProtKB-UniRule"/>
</dbReference>
<dbReference type="GO" id="GO:0006281">
    <property type="term" value="P:DNA repair"/>
    <property type="evidence" value="ECO:0007669"/>
    <property type="project" value="UniProtKB-UniRule"/>
</dbReference>
<dbReference type="CDD" id="cd01025">
    <property type="entry name" value="TOPRIM_recR"/>
    <property type="match status" value="1"/>
</dbReference>
<dbReference type="Gene3D" id="3.40.1360.10">
    <property type="match status" value="1"/>
</dbReference>
<dbReference type="Gene3D" id="6.10.250.240">
    <property type="match status" value="1"/>
</dbReference>
<dbReference type="Gene3D" id="1.10.8.420">
    <property type="entry name" value="RecR Domain 1"/>
    <property type="match status" value="1"/>
</dbReference>
<dbReference type="HAMAP" id="MF_00017">
    <property type="entry name" value="RecR"/>
    <property type="match status" value="1"/>
</dbReference>
<dbReference type="InterPro" id="IPR000093">
    <property type="entry name" value="DNA_Rcmb_RecR"/>
</dbReference>
<dbReference type="InterPro" id="IPR023627">
    <property type="entry name" value="Rcmb_RecR"/>
</dbReference>
<dbReference type="InterPro" id="IPR015967">
    <property type="entry name" value="Rcmb_RecR_Znf"/>
</dbReference>
<dbReference type="InterPro" id="IPR006171">
    <property type="entry name" value="TOPRIM_dom"/>
</dbReference>
<dbReference type="InterPro" id="IPR034137">
    <property type="entry name" value="TOPRIM_RecR"/>
</dbReference>
<dbReference type="NCBIfam" id="TIGR00615">
    <property type="entry name" value="recR"/>
    <property type="match status" value="1"/>
</dbReference>
<dbReference type="PANTHER" id="PTHR30446">
    <property type="entry name" value="RECOMBINATION PROTEIN RECR"/>
    <property type="match status" value="1"/>
</dbReference>
<dbReference type="PANTHER" id="PTHR30446:SF0">
    <property type="entry name" value="RECOMBINATION PROTEIN RECR"/>
    <property type="match status" value="1"/>
</dbReference>
<dbReference type="Pfam" id="PF21175">
    <property type="entry name" value="RecR_C"/>
    <property type="match status" value="1"/>
</dbReference>
<dbReference type="Pfam" id="PF21176">
    <property type="entry name" value="RecR_HhH"/>
    <property type="match status" value="1"/>
</dbReference>
<dbReference type="Pfam" id="PF02132">
    <property type="entry name" value="RecR_ZnF"/>
    <property type="match status" value="1"/>
</dbReference>
<dbReference type="Pfam" id="PF13662">
    <property type="entry name" value="Toprim_4"/>
    <property type="match status" value="1"/>
</dbReference>
<dbReference type="SMART" id="SM00493">
    <property type="entry name" value="TOPRIM"/>
    <property type="match status" value="1"/>
</dbReference>
<dbReference type="SUPFAM" id="SSF111304">
    <property type="entry name" value="Recombination protein RecR"/>
    <property type="match status" value="1"/>
</dbReference>
<dbReference type="PROSITE" id="PS01300">
    <property type="entry name" value="RECR"/>
    <property type="match status" value="1"/>
</dbReference>
<dbReference type="PROSITE" id="PS50880">
    <property type="entry name" value="TOPRIM"/>
    <property type="match status" value="1"/>
</dbReference>
<comment type="function">
    <text evidence="1">May play a role in DNA repair. It seems to be involved in an RecBC-independent recombinational process of DNA repair. It may act with RecF and RecO.</text>
</comment>
<comment type="similarity">
    <text evidence="1">Belongs to the RecR family.</text>
</comment>
<feature type="chain" id="PRO_0000190409" description="Recombination protein RecR">
    <location>
        <begin position="1"/>
        <end position="199"/>
    </location>
</feature>
<feature type="domain" description="Toprim" evidence="1">
    <location>
        <begin position="81"/>
        <end position="175"/>
    </location>
</feature>
<feature type="zinc finger region" description="C4-type" evidence="1">
    <location>
        <begin position="58"/>
        <end position="73"/>
    </location>
</feature>
<organism>
    <name type="scientific">Synechococcus sp. (strain ATCC 27144 / PCC 6301 / SAUG 1402/1)</name>
    <name type="common">Anacystis nidulans</name>
    <dbReference type="NCBI Taxonomy" id="269084"/>
    <lineage>
        <taxon>Bacteria</taxon>
        <taxon>Bacillati</taxon>
        <taxon>Cyanobacteriota</taxon>
        <taxon>Cyanophyceae</taxon>
        <taxon>Synechococcales</taxon>
        <taxon>Synechococcaceae</taxon>
        <taxon>Synechococcus</taxon>
    </lineage>
</organism>
<gene>
    <name evidence="1" type="primary">recR</name>
    <name type="ordered locus">syc0186_c</name>
</gene>
<accession>Q5N5P2</accession>
<evidence type="ECO:0000255" key="1">
    <source>
        <dbReference type="HAMAP-Rule" id="MF_00017"/>
    </source>
</evidence>
<name>RECR_SYNP6</name>
<reference key="1">
    <citation type="journal article" date="2007" name="Photosyn. Res.">
        <title>Complete nucleotide sequence of the freshwater unicellular cyanobacterium Synechococcus elongatus PCC 6301 chromosome: gene content and organization.</title>
        <authorList>
            <person name="Sugita C."/>
            <person name="Ogata K."/>
            <person name="Shikata M."/>
            <person name="Jikuya H."/>
            <person name="Takano J."/>
            <person name="Furumichi M."/>
            <person name="Kanehisa M."/>
            <person name="Omata T."/>
            <person name="Sugiura M."/>
            <person name="Sugita M."/>
        </authorList>
    </citation>
    <scope>NUCLEOTIDE SEQUENCE [LARGE SCALE GENOMIC DNA]</scope>
    <source>
        <strain>ATCC 27144 / PCC 6301 / SAUG 1402/1</strain>
    </source>
</reference>
<protein>
    <recommendedName>
        <fullName evidence="1">Recombination protein RecR</fullName>
    </recommendedName>
</protein>
<sequence length="199" mass="21983">MSVYTRPLARLIEHLQKLPGVGPKTAQRLALHLIQRPEAEIAAFAEALLAAKQQVGHCQRCFHLSSEDLCNICRDPKRDAQTICVVADPRDVIALEKTREYKGLYHVLGGLISPMDGIGPEQLTVQALVRRVAQEQTQEVIMAISPSVEGETTTLYVGQLLKPFTRVTRIAFGLPMGGDLEYADEVTLARALEGRRDLT</sequence>
<keyword id="KW-0227">DNA damage</keyword>
<keyword id="KW-0233">DNA recombination</keyword>
<keyword id="KW-0234">DNA repair</keyword>
<keyword id="KW-0479">Metal-binding</keyword>
<keyword id="KW-0862">Zinc</keyword>
<keyword id="KW-0863">Zinc-finger</keyword>